<feature type="signal peptide" evidence="2">
    <location>
        <begin position="1"/>
        <end position="20"/>
    </location>
</feature>
<feature type="chain" id="PRO_5000851450" description="Toxin Tpa7">
    <location>
        <begin position="21"/>
        <end position="82"/>
    </location>
</feature>
<feature type="domain" description="LCN-type CS-alpha/beta" evidence="3">
    <location>
        <begin position="21"/>
        <end position="82"/>
    </location>
</feature>
<feature type="disulfide bond" evidence="3">
    <location>
        <begin position="32"/>
        <end position="82"/>
    </location>
</feature>
<feature type="disulfide bond" evidence="3">
    <location>
        <begin position="36"/>
        <end position="58"/>
    </location>
</feature>
<feature type="disulfide bond" evidence="3">
    <location>
        <begin position="44"/>
        <end position="63"/>
    </location>
</feature>
<feature type="disulfide bond" evidence="3">
    <location>
        <begin position="48"/>
        <end position="65"/>
    </location>
</feature>
<proteinExistence type="evidence at transcript level"/>
<organism>
    <name type="scientific">Tityus pachyurus</name>
    <name type="common">Colombian scorpion</name>
    <dbReference type="NCBI Taxonomy" id="288781"/>
    <lineage>
        <taxon>Eukaryota</taxon>
        <taxon>Metazoa</taxon>
        <taxon>Ecdysozoa</taxon>
        <taxon>Arthropoda</taxon>
        <taxon>Chelicerata</taxon>
        <taxon>Arachnida</taxon>
        <taxon>Scorpiones</taxon>
        <taxon>Buthida</taxon>
        <taxon>Buthoidea</taxon>
        <taxon>Buthidae</taxon>
        <taxon>Tityus</taxon>
    </lineage>
</organism>
<comment type="function">
    <text evidence="1">Beta toxins bind voltage-independently at site-4 of sodium channels (Nav) and shift the voltage of activation toward more negative potentials thereby affecting sodium channel activation and promoting spontaneous and repetitive firing.</text>
</comment>
<comment type="subcellular location">
    <subcellularLocation>
        <location>Secreted</location>
    </subcellularLocation>
</comment>
<comment type="tissue specificity">
    <text>Expressed by the venom gland.</text>
</comment>
<comment type="domain">
    <text evidence="4">Has the structural arrangement of an alpha-helix connected to antiparallel beta-sheets by disulfide bonds (CS-alpha/beta).</text>
</comment>
<comment type="similarity">
    <text evidence="4">Belongs to the long (4 C-C) scorpion toxin superfamily. Sodium channel inhibitor family. Beta subfamily.</text>
</comment>
<evidence type="ECO:0000250" key="1"/>
<evidence type="ECO:0000255" key="2"/>
<evidence type="ECO:0000255" key="3">
    <source>
        <dbReference type="PROSITE-ProRule" id="PRU01210"/>
    </source>
</evidence>
<evidence type="ECO:0000305" key="4"/>
<sequence>MKGMILLISCLMLIEVVVECKEGYPLDTLNGCKVGCFFGTNSWCNDKCKSKTAAKGYCAWPSCYCYGFTDDSKIWDLKKNKC</sequence>
<dbReference type="EMBL" id="HE585242">
    <property type="protein sequence ID" value="CCD31436.1"/>
    <property type="molecule type" value="mRNA"/>
</dbReference>
<dbReference type="SMR" id="H1ZZI8"/>
<dbReference type="GO" id="GO:0005576">
    <property type="term" value="C:extracellular region"/>
    <property type="evidence" value="ECO:0007669"/>
    <property type="project" value="UniProtKB-SubCell"/>
</dbReference>
<dbReference type="GO" id="GO:0019871">
    <property type="term" value="F:sodium channel inhibitor activity"/>
    <property type="evidence" value="ECO:0007669"/>
    <property type="project" value="InterPro"/>
</dbReference>
<dbReference type="GO" id="GO:0090729">
    <property type="term" value="F:toxin activity"/>
    <property type="evidence" value="ECO:0007669"/>
    <property type="project" value="UniProtKB-KW"/>
</dbReference>
<dbReference type="CDD" id="cd23106">
    <property type="entry name" value="neurotoxins_LC_scorpion"/>
    <property type="match status" value="1"/>
</dbReference>
<dbReference type="Gene3D" id="3.30.30.10">
    <property type="entry name" value="Knottin, scorpion toxin-like"/>
    <property type="match status" value="1"/>
</dbReference>
<dbReference type="InterPro" id="IPR044062">
    <property type="entry name" value="LCN-type_CS_alpha_beta_dom"/>
</dbReference>
<dbReference type="InterPro" id="IPR036574">
    <property type="entry name" value="Scorpion_toxin-like_sf"/>
</dbReference>
<dbReference type="InterPro" id="IPR018218">
    <property type="entry name" value="Scorpion_toxinL"/>
</dbReference>
<dbReference type="InterPro" id="IPR002061">
    <property type="entry name" value="Scorpion_toxinL/defensin"/>
</dbReference>
<dbReference type="Pfam" id="PF00537">
    <property type="entry name" value="Toxin_3"/>
    <property type="match status" value="1"/>
</dbReference>
<dbReference type="PRINTS" id="PR00285">
    <property type="entry name" value="SCORPNTOXIN"/>
</dbReference>
<dbReference type="SUPFAM" id="SSF57095">
    <property type="entry name" value="Scorpion toxin-like"/>
    <property type="match status" value="1"/>
</dbReference>
<dbReference type="PROSITE" id="PS51863">
    <property type="entry name" value="LCN_CSAB"/>
    <property type="match status" value="1"/>
</dbReference>
<protein>
    <recommendedName>
        <fullName>Toxin Tpa7</fullName>
    </recommendedName>
    <alternativeName>
        <fullName>T-beta* NaTx1.3</fullName>
    </alternativeName>
</protein>
<reference key="1">
    <citation type="journal article" date="2012" name="PLoS ONE">
        <title>Identification and phylogenetic analysis of Tityus pachyurus and Tityus obscurus novel putative Na+-channel scorpion toxins.</title>
        <authorList>
            <person name="Guerrero-Vargas J.A."/>
            <person name="Mourao C.B."/>
            <person name="Quintero-Hernandez V."/>
            <person name="Possani L.D."/>
            <person name="Schwartz E.F."/>
        </authorList>
    </citation>
    <scope>NUCLEOTIDE SEQUENCE [MRNA]</scope>
    <scope>NOMENCLATURE</scope>
    <source>
        <tissue>Venom gland</tissue>
    </source>
</reference>
<accession>H1ZZI8</accession>
<keyword id="KW-1015">Disulfide bond</keyword>
<keyword id="KW-0872">Ion channel impairing toxin</keyword>
<keyword id="KW-0528">Neurotoxin</keyword>
<keyword id="KW-0964">Secreted</keyword>
<keyword id="KW-0732">Signal</keyword>
<keyword id="KW-0800">Toxin</keyword>
<keyword id="KW-0738">Voltage-gated sodium channel impairing toxin</keyword>
<name>SCX7_TITPA</name>